<sequence length="23" mass="2439">GLLQTIKEKLKELATGLVIGVQS</sequence>
<proteinExistence type="evidence at protein level"/>
<comment type="function">
    <text evidence="1">Has no antimicrobial or anticancer activity.</text>
</comment>
<comment type="subcellular location">
    <subcellularLocation>
        <location>Secreted</location>
    </subcellularLocation>
</comment>
<comment type="tissue specificity">
    <text>Expressed by the skin dorsal glands.</text>
</comment>
<comment type="similarity">
    <text evidence="2">Belongs to the frog skin active peptide (FSAP) family. Aurein subfamily.</text>
</comment>
<organism>
    <name type="scientific">Ranoidea aurea</name>
    <name type="common">Green and golden bell frog</name>
    <name type="synonym">Litoria aurea</name>
    <dbReference type="NCBI Taxonomy" id="8371"/>
    <lineage>
        <taxon>Eukaryota</taxon>
        <taxon>Metazoa</taxon>
        <taxon>Chordata</taxon>
        <taxon>Craniata</taxon>
        <taxon>Vertebrata</taxon>
        <taxon>Euteleostomi</taxon>
        <taxon>Amphibia</taxon>
        <taxon>Batrachia</taxon>
        <taxon>Anura</taxon>
        <taxon>Neobatrachia</taxon>
        <taxon>Hyloidea</taxon>
        <taxon>Hylidae</taxon>
        <taxon>Pelodryadinae</taxon>
        <taxon>Ranoidea</taxon>
    </lineage>
</organism>
<dbReference type="GO" id="GO:0005576">
    <property type="term" value="C:extracellular region"/>
    <property type="evidence" value="ECO:0007669"/>
    <property type="project" value="UniProtKB-SubCell"/>
</dbReference>
<dbReference type="GO" id="GO:0006952">
    <property type="term" value="P:defense response"/>
    <property type="evidence" value="ECO:0007669"/>
    <property type="project" value="UniProtKB-KW"/>
</dbReference>
<reference key="1">
    <citation type="journal article" date="2000" name="Eur. J. Biochem.">
        <title>The antibiotic and anticancer active aurein peptides from the australian bell frogs Litoria aurea and Litoria raniformis the solution structure of aurein 1.2.</title>
        <authorList>
            <person name="Rozek T."/>
            <person name="Wegener K.L."/>
            <person name="Bowie J.H."/>
            <person name="Olver I.N."/>
            <person name="Carver J.A."/>
            <person name="Wallace J.C."/>
            <person name="Tyler M.J."/>
        </authorList>
    </citation>
    <scope>PROTEIN SEQUENCE</scope>
    <scope>FUNCTION</scope>
    <source>
        <tissue>Skin secretion</tissue>
    </source>
</reference>
<feature type="peptide" id="PRO_0000043731" description="Aurein-4.4">
    <location>
        <begin position="1"/>
        <end position="23"/>
    </location>
</feature>
<name>AUR44_RANAE</name>
<keyword id="KW-0878">Amphibian defense peptide</keyword>
<keyword id="KW-0903">Direct protein sequencing</keyword>
<keyword id="KW-0964">Secreted</keyword>
<protein>
    <recommendedName>
        <fullName>Aurein-4.4</fullName>
    </recommendedName>
</protein>
<evidence type="ECO:0000269" key="1">
    <source>
    </source>
</evidence>
<evidence type="ECO:0000305" key="2"/>
<accession>P69027</accession>
<accession>P82400</accession>